<proteinExistence type="evidence at protein level"/>
<comment type="function">
    <text evidence="3 6 7">Calcium-activated selective cation channel that mediates membrane depolarization. While it is activated by increase in intracellular Ca(2+), it is impermeable to it. Mediates transport of monovalent cations (Na(+) &gt; K(+) &gt; Cs(+) &gt; Li(+)), leading to depolarize the membrane (PubMed:16966582, PubMed:19945433). It thereby plays a central role in cadiomyocytes, neurons from entorhinal cortex, dorsal root and vomeronasal neurons, endocrine pancreas cells, kidney epithelial cells, cochlea hair cells etc. Participates in T-cell activation by modulating Ca(2+) oscillations after T lymphocyte activation, which is required for NFAT-dependent IL2 production. Involved in myogenic constriction of cerebral arteries. Controls insulin secretion in pancreatic beta-cells. May also be involved in pacemaking or could cause irregular electrical activity under conditions of Ca(2+) overload. Affects T-helper 1 (Th1) and T-helper 2 (Th2) cell motility and cytokine production through differential regulation of calcium signaling and NFATC1 localization. Enhances cell proliferation through up-regulation of the beta-catenin signaling pathway. Plays a role in keratinocyte differentiation (By similarity).</text>
</comment>
<comment type="function">
    <molecule>Isoform 2</molecule>
    <text evidence="7">Lacks channel activity.</text>
</comment>
<comment type="catalytic activity">
    <reaction evidence="6">
        <text>Na(+)(in) = Na(+)(out)</text>
        <dbReference type="Rhea" id="RHEA:34963"/>
        <dbReference type="ChEBI" id="CHEBI:29101"/>
    </reaction>
</comment>
<comment type="catalytic activity">
    <reaction evidence="6">
        <text>K(+)(in) = K(+)(out)</text>
        <dbReference type="Rhea" id="RHEA:29463"/>
        <dbReference type="ChEBI" id="CHEBI:29103"/>
    </reaction>
</comment>
<comment type="activity regulation">
    <text evidence="3 6">Gating is voltage-dependent and repressed by decavanadate. Calmodulin-binding confers the Ca(2+) sensitivity. ATP is able to restore Ca(2+) sensitivity after desensitization (PubMed:16966582). Phosphatidylinositol 4,5-bisphosphate (PIP2)-binding strongly enhances activity, by increasing the channel's Ca(2+) sensitivity and shifting its voltage dependence of activation towards negative potentials. Activity is also enhanced by 3,5-bis(trifluoromethyl)pyrazole derivative (BTP2) (By similarity). Exhibits pronounced temperature sensitivity, with activities strongly intensifying near physiological temperatures. TRPM4 can adopt distinct conformations at different temperatures, markedly influencing where and how ligands interact with them.</text>
</comment>
<comment type="subunit">
    <text evidence="3">Homotetramer.</text>
</comment>
<comment type="subcellular location">
    <molecule>Isoform 1</molecule>
    <subcellularLocation>
        <location evidence="7">Cell membrane</location>
        <topology evidence="3">Multi-pass membrane protein</topology>
    </subcellularLocation>
    <subcellularLocation>
        <location evidence="7">Endoplasmic reticulum</location>
    </subcellularLocation>
    <subcellularLocation>
        <location evidence="7">Golgi apparatus</location>
    </subcellularLocation>
</comment>
<comment type="subcellular location">
    <molecule>Isoform 2</molecule>
    <subcellularLocation>
        <location evidence="7">Cell membrane</location>
        <topology evidence="3">Multi-pass membrane protein</topology>
    </subcellularLocation>
    <subcellularLocation>
        <location evidence="7">Endoplasmic reticulum</location>
    </subcellularLocation>
    <subcellularLocation>
        <location evidence="7">Golgi apparatus</location>
    </subcellularLocation>
    <text evidence="7">Mainly integrated into the ER/Golgi complex and is rarely found in the plasma membrane.</text>
</comment>
<comment type="alternative products">
    <event type="alternative splicing"/>
    <isoform>
        <id>Q9ESQ5-1</id>
        <name>1</name>
        <name evidence="8">TRPM4b</name>
        <sequence type="displayed"/>
    </isoform>
    <isoform>
        <id>Q9ESQ5-2</id>
        <name>2</name>
        <name evidence="8">TRPM4a</name>
        <sequence type="described" ref="VSP_040337"/>
    </isoform>
    <text>Additional isoforms may exist.</text>
</comment>
<comment type="tissue specificity">
    <text evidence="7">Isoform 1 is highly expressed in the testis with a moderate expression in the brain, spleen and thymus. Isoform 2 is only expressed in the brain and spleen.</text>
</comment>
<comment type="domain">
    <text evidence="3">TRPM4, is a temperature-sensitive ion channel, it adopts distinct conformations at different temperatures, markedly influencing where and how ligands interact with it. Decavanadate (a positive modulator), ATP (an inhibitor) and Ca(2+) bind to different locations of TRPM4 at physiological temperatures or at lower temperatures.</text>
</comment>
<comment type="PTM">
    <text evidence="3">Phosphorylation by PKC leads to increase the sensitivity to Ca(2+).</text>
</comment>
<comment type="PTM">
    <text evidence="3">Sumoylated. Desumoylated by SENP1.</text>
</comment>
<comment type="similarity">
    <text evidence="9">Belongs to the transient receptor (TC 1.A.4) family. LTrpC subfamily. TRPM4 sub-subfamily.</text>
</comment>
<comment type="sequence caution" evidence="9">
    <conflict type="miscellaneous discrepancy">
        <sequence resource="EMBL-CDS" id="BAB15808"/>
    </conflict>
    <text>Chimeric cDNA.</text>
</comment>
<keyword id="KW-1064">Adaptive immunity</keyword>
<keyword id="KW-0025">Alternative splicing</keyword>
<keyword id="KW-0067">ATP-binding</keyword>
<keyword id="KW-0106">Calcium</keyword>
<keyword id="KW-0112">Calmodulin-binding</keyword>
<keyword id="KW-1003">Cell membrane</keyword>
<keyword id="KW-0175">Coiled coil</keyword>
<keyword id="KW-1015">Disulfide bond</keyword>
<keyword id="KW-0256">Endoplasmic reticulum</keyword>
<keyword id="KW-0333">Golgi apparatus</keyword>
<keyword id="KW-0391">Immunity</keyword>
<keyword id="KW-0407">Ion channel</keyword>
<keyword id="KW-0406">Ion transport</keyword>
<keyword id="KW-0472">Membrane</keyword>
<keyword id="KW-0479">Metal-binding</keyword>
<keyword id="KW-0547">Nucleotide-binding</keyword>
<keyword id="KW-0597">Phosphoprotein</keyword>
<keyword id="KW-1185">Reference proteome</keyword>
<keyword id="KW-0812">Transmembrane</keyword>
<keyword id="KW-1133">Transmembrane helix</keyword>
<keyword id="KW-0813">Transport</keyword>
<keyword id="KW-0832">Ubl conjugation</keyword>
<feature type="chain" id="PRO_0000259531" description="Transient receptor potential cation channel subfamily M member 4">
    <location>
        <begin position="1"/>
        <end position="1208"/>
    </location>
</feature>
<feature type="topological domain" description="Cytoplasmic" evidence="2">
    <location>
        <begin position="1"/>
        <end position="776"/>
    </location>
</feature>
<feature type="transmembrane region" description="Helical" evidence="2">
    <location>
        <begin position="777"/>
        <end position="797"/>
    </location>
</feature>
<feature type="topological domain" description="Extracellular" evidence="2">
    <location>
        <begin position="798"/>
        <end position="808"/>
    </location>
</feature>
<feature type="transmembrane region" description="Helical" evidence="2">
    <location>
        <begin position="809"/>
        <end position="829"/>
    </location>
</feature>
<feature type="topological domain" description="Cytoplasmic" evidence="2">
    <location>
        <begin position="830"/>
        <end position="857"/>
    </location>
</feature>
<feature type="transmembrane region" description="Helical" evidence="2">
    <location>
        <begin position="858"/>
        <end position="878"/>
    </location>
</feature>
<feature type="topological domain" description="Extracellular" evidence="2">
    <location>
        <begin position="879"/>
        <end position="880"/>
    </location>
</feature>
<feature type="transmembrane region" description="Helical" evidence="2">
    <location>
        <begin position="881"/>
        <end position="904"/>
    </location>
</feature>
<feature type="topological domain" description="Cytoplasmic" evidence="2">
    <location>
        <begin position="905"/>
        <end position="924"/>
    </location>
</feature>
<feature type="transmembrane region" description="Helical" evidence="2">
    <location>
        <begin position="925"/>
        <end position="945"/>
    </location>
</feature>
<feature type="topological domain" description="Extracellular" evidence="2">
    <location>
        <begin position="946"/>
        <end position="957"/>
    </location>
</feature>
<feature type="intramembrane region" description="Pore-forming" evidence="2">
    <location>
        <begin position="958"/>
        <end position="978"/>
    </location>
</feature>
<feature type="topological domain" description="Extracellular" evidence="2">
    <location>
        <begin position="979"/>
        <end position="1013"/>
    </location>
</feature>
<feature type="transmembrane region" description="Helical" evidence="2">
    <location>
        <begin position="1014"/>
        <end position="1034"/>
    </location>
</feature>
<feature type="topological domain" description="Cytoplasmic" evidence="2">
    <location>
        <begin position="1035"/>
        <end position="1208"/>
    </location>
</feature>
<feature type="region of interest" description="Calmodulin-binding" evidence="1">
    <location>
        <begin position="1070"/>
        <end position="1170"/>
    </location>
</feature>
<feature type="region of interest" description="Mediates modulation by decavanadate and PIP2-binding" evidence="3">
    <location>
        <begin position="1130"/>
        <end position="1135"/>
    </location>
</feature>
<feature type="region of interest" description="Disordered" evidence="5">
    <location>
        <begin position="1189"/>
        <end position="1208"/>
    </location>
</feature>
<feature type="coiled-coil region" evidence="4">
    <location>
        <begin position="1128"/>
        <end position="1180"/>
    </location>
</feature>
<feature type="short sequence motif" description="Selectivity filter" evidence="2">
    <location>
        <begin position="969"/>
        <end position="971"/>
    </location>
</feature>
<feature type="compositionally biased region" description="Pro residues" evidence="5">
    <location>
        <begin position="1195"/>
        <end position="1208"/>
    </location>
</feature>
<feature type="binding site" evidence="2">
    <location>
        <position position="172"/>
    </location>
    <ligand>
        <name>ATP</name>
        <dbReference type="ChEBI" id="CHEBI:30616"/>
        <label>2</label>
        <note>ligand shared between two neighboring subunits</note>
    </ligand>
</feature>
<feature type="binding site" evidence="3">
    <location>
        <position position="215"/>
    </location>
    <ligand>
        <name>ATP</name>
        <dbReference type="ChEBI" id="CHEBI:30616"/>
        <label>1</label>
    </ligand>
</feature>
<feature type="binding site" evidence="3">
    <location>
        <position position="226"/>
    </location>
    <ligand>
        <name>ATP</name>
        <dbReference type="ChEBI" id="CHEBI:30616"/>
        <label>1</label>
    </ligand>
</feature>
<feature type="binding site" evidence="3">
    <location>
        <position position="271"/>
    </location>
    <ligand>
        <name>Ca(2+)</name>
        <dbReference type="ChEBI" id="CHEBI:29108"/>
        <label>1</label>
    </ligand>
</feature>
<feature type="binding site" evidence="3">
    <location>
        <position position="393"/>
    </location>
    <ligand>
        <name>Ca(2+)</name>
        <dbReference type="ChEBI" id="CHEBI:29108"/>
        <label>1</label>
    </ligand>
</feature>
<feature type="binding site" evidence="3">
    <location>
        <position position="396"/>
    </location>
    <ligand>
        <name>Ca(2+)</name>
        <dbReference type="ChEBI" id="CHEBI:29108"/>
        <label>1</label>
    </ligand>
</feature>
<feature type="binding site" evidence="3">
    <location>
        <position position="397"/>
    </location>
    <ligand>
        <name>Ca(2+)</name>
        <dbReference type="ChEBI" id="CHEBI:29108"/>
        <label>1</label>
    </ligand>
</feature>
<feature type="binding site" description="in other chain" evidence="2">
    <location>
        <position position="422"/>
    </location>
    <ligand>
        <name>ATP</name>
        <dbReference type="ChEBI" id="CHEBI:30616"/>
        <label>2</label>
        <note>ligand shared between two neighboring subunits</note>
    </ligand>
</feature>
<feature type="binding site" description="in other chain" evidence="2">
    <location>
        <position position="449"/>
    </location>
    <ligand>
        <name>ATP</name>
        <dbReference type="ChEBI" id="CHEBI:30616"/>
        <label>2</label>
        <note>ligand shared between two neighboring subunits</note>
    </ligand>
</feature>
<feature type="binding site" evidence="3">
    <location>
        <position position="822"/>
    </location>
    <ligand>
        <name>Ca(2+)</name>
        <dbReference type="ChEBI" id="CHEBI:29108"/>
        <label>2</label>
    </ligand>
</feature>
<feature type="binding site" evidence="3">
    <location>
        <position position="825"/>
    </location>
    <ligand>
        <name>Ca(2+)</name>
        <dbReference type="ChEBI" id="CHEBI:29108"/>
        <label>2</label>
    </ligand>
</feature>
<feature type="binding site" evidence="3">
    <location>
        <position position="859"/>
    </location>
    <ligand>
        <name>Ca(2+)</name>
        <dbReference type="ChEBI" id="CHEBI:29108"/>
        <label>2</label>
    </ligand>
</feature>
<feature type="binding site" evidence="3">
    <location>
        <position position="862"/>
    </location>
    <ligand>
        <name>Ca(2+)</name>
        <dbReference type="ChEBI" id="CHEBI:29108"/>
        <label>2</label>
    </ligand>
</feature>
<feature type="modified residue" description="Phosphoserine" evidence="10">
    <location>
        <position position="527"/>
    </location>
</feature>
<feature type="modified residue" description="Phosphoserine" evidence="2">
    <location>
        <position position="538"/>
    </location>
</feature>
<feature type="modified residue" description="Phosphoserine; by PKC" evidence="3">
    <location>
        <position position="1139"/>
    </location>
</feature>
<feature type="modified residue" description="Phosphoserine; by PKC" evidence="3">
    <location>
        <position position="1146"/>
    </location>
</feature>
<feature type="disulfide bond" evidence="2">
    <location>
        <begin position="987"/>
        <end position="1005"/>
    </location>
</feature>
<feature type="splice variant" id="VSP_040337" description="In isoform 2." evidence="8">
    <location>
        <begin position="1"/>
        <end position="186"/>
    </location>
</feature>
<gene>
    <name type="primary">Trpm4</name>
    <name type="synonym">Ltrpc4</name>
</gene>
<accession>Q9ESQ5</accession>
<name>TRPM4_RAT</name>
<dbReference type="EMBL" id="AABR03000917">
    <property type="status" value="NOT_ANNOTATED_CDS"/>
    <property type="molecule type" value="Genomic_DNA"/>
</dbReference>
<dbReference type="EMBL" id="AABR03004552">
    <property type="status" value="NOT_ANNOTATED_CDS"/>
    <property type="molecule type" value="Genomic_DNA"/>
</dbReference>
<dbReference type="EMBL" id="AB040807">
    <property type="protein sequence ID" value="BAB15808.1"/>
    <property type="status" value="ALT_SEQ"/>
    <property type="molecule type" value="mRNA"/>
</dbReference>
<dbReference type="RefSeq" id="NP_001129701.1">
    <molecule id="Q9ESQ5-1"/>
    <property type="nucleotide sequence ID" value="NM_001136229.1"/>
</dbReference>
<dbReference type="SMR" id="Q9ESQ5"/>
<dbReference type="FunCoup" id="Q9ESQ5">
    <property type="interactions" value="80"/>
</dbReference>
<dbReference type="STRING" id="10116.ENSRNOP00000041387"/>
<dbReference type="DrugCentral" id="Q9ESQ5"/>
<dbReference type="iPTMnet" id="Q9ESQ5"/>
<dbReference type="PhosphoSitePlus" id="Q9ESQ5"/>
<dbReference type="PaxDb" id="10116-ENSRNOP00000041387"/>
<dbReference type="ABCD" id="Q9ESQ5">
    <property type="antibodies" value="1 sequenced antibody"/>
</dbReference>
<dbReference type="GeneID" id="171143"/>
<dbReference type="KEGG" id="rno:171143"/>
<dbReference type="UCSC" id="RGD:620244">
    <molecule id="Q9ESQ5-1"/>
    <property type="organism name" value="rat"/>
</dbReference>
<dbReference type="AGR" id="RGD:620244"/>
<dbReference type="CTD" id="54795"/>
<dbReference type="RGD" id="620244">
    <property type="gene designation" value="Trpm4"/>
</dbReference>
<dbReference type="eggNOG" id="KOG3614">
    <property type="taxonomic scope" value="Eukaryota"/>
</dbReference>
<dbReference type="HOGENOM" id="CLU_001390_0_3_1"/>
<dbReference type="InParanoid" id="Q9ESQ5"/>
<dbReference type="OrthoDB" id="65556at9989"/>
<dbReference type="PhylomeDB" id="Q9ESQ5"/>
<dbReference type="TreeFam" id="TF314204"/>
<dbReference type="Reactome" id="R-RNO-3295583">
    <property type="pathway name" value="TRP channels"/>
</dbReference>
<dbReference type="PRO" id="PR:Q9ESQ5"/>
<dbReference type="Proteomes" id="UP000002494">
    <property type="component" value="Unplaced"/>
</dbReference>
<dbReference type="GO" id="GO:0005783">
    <property type="term" value="C:endoplasmic reticulum"/>
    <property type="evidence" value="ECO:0000314"/>
    <property type="project" value="UniProtKB"/>
</dbReference>
<dbReference type="GO" id="GO:0005794">
    <property type="term" value="C:Golgi apparatus"/>
    <property type="evidence" value="ECO:0000314"/>
    <property type="project" value="UniProtKB"/>
</dbReference>
<dbReference type="GO" id="GO:0016020">
    <property type="term" value="C:membrane"/>
    <property type="evidence" value="ECO:0000266"/>
    <property type="project" value="RGD"/>
</dbReference>
<dbReference type="GO" id="GO:0043025">
    <property type="term" value="C:neuronal cell body"/>
    <property type="evidence" value="ECO:0000314"/>
    <property type="project" value="RGD"/>
</dbReference>
<dbReference type="GO" id="GO:0005886">
    <property type="term" value="C:plasma membrane"/>
    <property type="evidence" value="ECO:0000314"/>
    <property type="project" value="UniProtKB"/>
</dbReference>
<dbReference type="GO" id="GO:0034706">
    <property type="term" value="C:sodium channel complex"/>
    <property type="evidence" value="ECO:0000266"/>
    <property type="project" value="RGD"/>
</dbReference>
<dbReference type="GO" id="GO:0005524">
    <property type="term" value="F:ATP binding"/>
    <property type="evidence" value="ECO:0000266"/>
    <property type="project" value="RGD"/>
</dbReference>
<dbReference type="GO" id="GO:0005262">
    <property type="term" value="F:calcium channel activity"/>
    <property type="evidence" value="ECO:0000266"/>
    <property type="project" value="RGD"/>
</dbReference>
<dbReference type="GO" id="GO:0005509">
    <property type="term" value="F:calcium ion binding"/>
    <property type="evidence" value="ECO:0000250"/>
    <property type="project" value="UniProtKB"/>
</dbReference>
<dbReference type="GO" id="GO:0005227">
    <property type="term" value="F:calcium-activated cation channel activity"/>
    <property type="evidence" value="ECO:0000314"/>
    <property type="project" value="UniProtKB"/>
</dbReference>
<dbReference type="GO" id="GO:0005516">
    <property type="term" value="F:calmodulin binding"/>
    <property type="evidence" value="ECO:0007669"/>
    <property type="project" value="UniProtKB-KW"/>
</dbReference>
<dbReference type="GO" id="GO:0002250">
    <property type="term" value="P:adaptive immune response"/>
    <property type="evidence" value="ECO:0007669"/>
    <property type="project" value="UniProtKB-KW"/>
</dbReference>
<dbReference type="GO" id="GO:0006816">
    <property type="term" value="P:calcium ion transport"/>
    <property type="evidence" value="ECO:0000266"/>
    <property type="project" value="RGD"/>
</dbReference>
<dbReference type="GO" id="GO:0019722">
    <property type="term" value="P:calcium-mediated signaling"/>
    <property type="evidence" value="ECO:0000266"/>
    <property type="project" value="RGD"/>
</dbReference>
<dbReference type="GO" id="GO:0071318">
    <property type="term" value="P:cellular response to ATP"/>
    <property type="evidence" value="ECO:0000266"/>
    <property type="project" value="RGD"/>
</dbReference>
<dbReference type="GO" id="GO:0002407">
    <property type="term" value="P:dendritic cell chemotaxis"/>
    <property type="evidence" value="ECO:0000250"/>
    <property type="project" value="UniProtKB"/>
</dbReference>
<dbReference type="GO" id="GO:0098662">
    <property type="term" value="P:inorganic cation transmembrane transport"/>
    <property type="evidence" value="ECO:0000250"/>
    <property type="project" value="UniProtKB"/>
</dbReference>
<dbReference type="GO" id="GO:0007616">
    <property type="term" value="P:long-term memory"/>
    <property type="evidence" value="ECO:0000315"/>
    <property type="project" value="RGD"/>
</dbReference>
<dbReference type="GO" id="GO:0086045">
    <property type="term" value="P:membrane depolarization during AV node cell action potential"/>
    <property type="evidence" value="ECO:0000266"/>
    <property type="project" value="RGD"/>
</dbReference>
<dbReference type="GO" id="GO:0086048">
    <property type="term" value="P:membrane depolarization during bundle of His cell action potential"/>
    <property type="evidence" value="ECO:0000266"/>
    <property type="project" value="RGD"/>
</dbReference>
<dbReference type="GO" id="GO:0086047">
    <property type="term" value="P:membrane depolarization during Purkinje myocyte cell action potential"/>
    <property type="evidence" value="ECO:0000266"/>
    <property type="project" value="RGD"/>
</dbReference>
<dbReference type="GO" id="GO:0030001">
    <property type="term" value="P:metal ion transport"/>
    <property type="evidence" value="ECO:0000318"/>
    <property type="project" value="GO_Central"/>
</dbReference>
<dbReference type="GO" id="GO:0098655">
    <property type="term" value="P:monoatomic cation transmembrane transport"/>
    <property type="evidence" value="ECO:0000318"/>
    <property type="project" value="GO_Central"/>
</dbReference>
<dbReference type="GO" id="GO:0030502">
    <property type="term" value="P:negative regulation of bone mineralization"/>
    <property type="evidence" value="ECO:0000315"/>
    <property type="project" value="RGD"/>
</dbReference>
<dbReference type="GO" id="GO:0045668">
    <property type="term" value="P:negative regulation of osteoblast differentiation"/>
    <property type="evidence" value="ECO:0000315"/>
    <property type="project" value="RGD"/>
</dbReference>
<dbReference type="GO" id="GO:1904179">
    <property type="term" value="P:positive regulation of adipose tissue development"/>
    <property type="evidence" value="ECO:0000315"/>
    <property type="project" value="RGD"/>
</dbReference>
<dbReference type="GO" id="GO:1903949">
    <property type="term" value="P:positive regulation of atrial cardiac muscle cell action potential"/>
    <property type="evidence" value="ECO:0000315"/>
    <property type="project" value="RGD"/>
</dbReference>
<dbReference type="GO" id="GO:0090263">
    <property type="term" value="P:positive regulation of canonical Wnt signaling pathway"/>
    <property type="evidence" value="ECO:0000250"/>
    <property type="project" value="UniProtKB"/>
</dbReference>
<dbReference type="GO" id="GO:0008284">
    <property type="term" value="P:positive regulation of cell population proliferation"/>
    <property type="evidence" value="ECO:0000250"/>
    <property type="project" value="UniProtKB"/>
</dbReference>
<dbReference type="GO" id="GO:0007204">
    <property type="term" value="P:positive regulation of cytosolic calcium ion concentration"/>
    <property type="evidence" value="ECO:0000315"/>
    <property type="project" value="RGD"/>
</dbReference>
<dbReference type="GO" id="GO:0045600">
    <property type="term" value="P:positive regulation of fat cell differentiation"/>
    <property type="evidence" value="ECO:0000315"/>
    <property type="project" value="RGD"/>
</dbReference>
<dbReference type="GO" id="GO:0010460">
    <property type="term" value="P:positive regulation of heart rate"/>
    <property type="evidence" value="ECO:0000315"/>
    <property type="project" value="RGD"/>
</dbReference>
<dbReference type="GO" id="GO:0035774">
    <property type="term" value="P:positive regulation of insulin secretion involved in cellular response to glucose stimulus"/>
    <property type="evidence" value="ECO:0000315"/>
    <property type="project" value="RGD"/>
</dbReference>
<dbReference type="GO" id="GO:1904199">
    <property type="term" value="P:positive regulation of regulation of vascular associated smooth muscle cell membrane depolarization"/>
    <property type="evidence" value="ECO:0000315"/>
    <property type="project" value="RGD"/>
</dbReference>
<dbReference type="GO" id="GO:0045907">
    <property type="term" value="P:positive regulation of vasoconstriction"/>
    <property type="evidence" value="ECO:0000315"/>
    <property type="project" value="RGD"/>
</dbReference>
<dbReference type="GO" id="GO:0051289">
    <property type="term" value="P:protein homotetramerization"/>
    <property type="evidence" value="ECO:0000250"/>
    <property type="project" value="UniProtKB"/>
</dbReference>
<dbReference type="GO" id="GO:0016925">
    <property type="term" value="P:protein sumoylation"/>
    <property type="evidence" value="ECO:0000250"/>
    <property type="project" value="UniProtKB"/>
</dbReference>
<dbReference type="GO" id="GO:0086091">
    <property type="term" value="P:regulation of heart rate by cardiac conduction"/>
    <property type="evidence" value="ECO:0000266"/>
    <property type="project" value="RGD"/>
</dbReference>
<dbReference type="GO" id="GO:0002724">
    <property type="term" value="P:regulation of T cell cytokine production"/>
    <property type="evidence" value="ECO:0000250"/>
    <property type="project" value="UniProtKB"/>
</dbReference>
<dbReference type="GO" id="GO:0098911">
    <property type="term" value="P:regulation of ventricular cardiac muscle cell action potential"/>
    <property type="evidence" value="ECO:0000266"/>
    <property type="project" value="RGD"/>
</dbReference>
<dbReference type="GO" id="GO:0098719">
    <property type="term" value="P:sodium ion import across plasma membrane"/>
    <property type="evidence" value="ECO:0000266"/>
    <property type="project" value="RGD"/>
</dbReference>
<dbReference type="InterPro" id="IPR005821">
    <property type="entry name" value="Ion_trans_dom"/>
</dbReference>
<dbReference type="InterPro" id="IPR050927">
    <property type="entry name" value="TRPM"/>
</dbReference>
<dbReference type="InterPro" id="IPR041491">
    <property type="entry name" value="TRPM_SLOG"/>
</dbReference>
<dbReference type="PANTHER" id="PTHR13800:SF6">
    <property type="entry name" value="TRANSIENT RECEPTOR POTENTIAL CATION CHANNEL SUBFAMILY M MEMBER 4"/>
    <property type="match status" value="1"/>
</dbReference>
<dbReference type="PANTHER" id="PTHR13800">
    <property type="entry name" value="TRANSIENT RECEPTOR POTENTIAL CATION CHANNEL, SUBFAMILY M, MEMBER 6"/>
    <property type="match status" value="1"/>
</dbReference>
<dbReference type="Pfam" id="PF00520">
    <property type="entry name" value="Ion_trans"/>
    <property type="match status" value="1"/>
</dbReference>
<dbReference type="Pfam" id="PF18139">
    <property type="entry name" value="LSDAT_euk"/>
    <property type="match status" value="1"/>
</dbReference>
<dbReference type="Pfam" id="PF25508">
    <property type="entry name" value="TRPM2"/>
    <property type="match status" value="1"/>
</dbReference>
<dbReference type="SUPFAM" id="SSF140860">
    <property type="entry name" value="Pseudo ankyrin repeat-like"/>
    <property type="match status" value="1"/>
</dbReference>
<sequence length="1208" mass="135341">MVGQEKEQSWIPKIFRKKVCTTFIVDLHDDAGGTLCQCGQPRDAHPSVAVEDAFGAAVVTEWNSDEHTTEKPTDAYGDLDFTYSGRKSSNFLRLSDRTDPATVYSLVTRSWGFRAPNLVVSVLGGSEGPVLQTWLQDLLRRGLVRAAQSTGAWIVTGGLHTGIGRHVGVAVRDHQTASTGGSKVVAMGVAPWGVVRNRDMLINPKGSFPARYRWRGDPEDGVEFPLDYNYSAFFLVDDGTYGRMGGENRFRLRFESYVAQQKTGVGGTGIDIPVLLLLIEGDEKMLKRIEDATQAQLPCLLVAGSGGAADCLVETLEDTLAPGSGGLRRGEARDRIRRYFPKGDPEVLQAQVERIMTRKELLTVYSSEDGSEEFETIVLRALVKACGSSEASAYLDELRLAVAWNRVDIAQSELFRGDIQWRSFHLEASLMDALLNDRPEFVRLLISHGLSLGHFLTPVRLAQLYSAVSPNSLIRNLLDQASHASSSKSPPANGAAELRPPNVGQVLRTLLGETCAPRYPARNTRHSLLGQDHRENDSLLMDWANMQQDASFEQAPWSDLLIWALLLNRAQMAIYFWEKGSNSVASALGACLLLRVMARLEWEAEEAARRKDLAAKFESMSVDLFGECYHNSEYRAARLLLRRCPLWGEATCLQLAMQADARAFFAQDGVQSLLTQKWWGEMDSTNPIWALLLTFFCPPLIYTNLILFRKSEEEPTQKDLDFDMDSSMNGAGPLGPAEPSAKVALERRRRRRPGHTLCCGGCSKRWSYFWGAPVTAFLGNVVSYLLFLLLFAHVLLVDFQPTKPGVFELLLYFWAFTLLCEELRQGLGGGWGTLANGGPGPGKAPLRHRLHLYLLDTWNQCDLLALTCFLLGVGCRLTPGLFDLGRTVLCLDFMIFTLRLLHIFTVNKQLGPKIVIVSKMMKDVFFFLFFLCVWLVAYGVATEGILRPQDRSLPSILRRVFYRPYLQIFGQIPQEEMDVALMNPSNCSAERGSWAHPEGPVAGSCVSQYANWLVVLLLIVFLLVANILLLNLLIAMFSYTFNKVHGNSDLYWKAQRYSLIREFHSRPALAPPLIIISHLRLLFKWLRRCHRTNLPASPVFEHFRVCLSKEAERTLLTWESVHKENFLLAQARDKRDSDSERLKRTSQKVDTALKQLGQIREYDRRLRGLEREVQHCSRVLTWMAEALSHSALLPPGGPPPPSPTGSKD</sequence>
<organism>
    <name type="scientific">Rattus norvegicus</name>
    <name type="common">Rat</name>
    <dbReference type="NCBI Taxonomy" id="10116"/>
    <lineage>
        <taxon>Eukaryota</taxon>
        <taxon>Metazoa</taxon>
        <taxon>Chordata</taxon>
        <taxon>Craniata</taxon>
        <taxon>Vertebrata</taxon>
        <taxon>Euteleostomi</taxon>
        <taxon>Mammalia</taxon>
        <taxon>Eutheria</taxon>
        <taxon>Euarchontoglires</taxon>
        <taxon>Glires</taxon>
        <taxon>Rodentia</taxon>
        <taxon>Myomorpha</taxon>
        <taxon>Muroidea</taxon>
        <taxon>Muridae</taxon>
        <taxon>Murinae</taxon>
        <taxon>Rattus</taxon>
    </lineage>
</organism>
<reference key="1">
    <citation type="journal article" date="2004" name="Nature">
        <title>Genome sequence of the Brown Norway rat yields insights into mammalian evolution.</title>
        <authorList>
            <person name="Gibbs R.A."/>
            <person name="Weinstock G.M."/>
            <person name="Metzker M.L."/>
            <person name="Muzny D.M."/>
            <person name="Sodergren E.J."/>
            <person name="Scherer S."/>
            <person name="Scott G."/>
            <person name="Steffen D."/>
            <person name="Worley K.C."/>
            <person name="Burch P.E."/>
            <person name="Okwuonu G."/>
            <person name="Hines S."/>
            <person name="Lewis L."/>
            <person name="Deramo C."/>
            <person name="Delgado O."/>
            <person name="Dugan-Rocha S."/>
            <person name="Miner G."/>
            <person name="Morgan M."/>
            <person name="Hawes A."/>
            <person name="Gill R."/>
            <person name="Holt R.A."/>
            <person name="Adams M.D."/>
            <person name="Amanatides P.G."/>
            <person name="Baden-Tillson H."/>
            <person name="Barnstead M."/>
            <person name="Chin S."/>
            <person name="Evans C.A."/>
            <person name="Ferriera S."/>
            <person name="Fosler C."/>
            <person name="Glodek A."/>
            <person name="Gu Z."/>
            <person name="Jennings D."/>
            <person name="Kraft C.L."/>
            <person name="Nguyen T."/>
            <person name="Pfannkoch C.M."/>
            <person name="Sitter C."/>
            <person name="Sutton G.G."/>
            <person name="Venter J.C."/>
            <person name="Woodage T."/>
            <person name="Smith D."/>
            <person name="Lee H.-M."/>
            <person name="Gustafson E."/>
            <person name="Cahill P."/>
            <person name="Kana A."/>
            <person name="Doucette-Stamm L."/>
            <person name="Weinstock K."/>
            <person name="Fechtel K."/>
            <person name="Weiss R.B."/>
            <person name="Dunn D.M."/>
            <person name="Green E.D."/>
            <person name="Blakesley R.W."/>
            <person name="Bouffard G.G."/>
            <person name="De Jong P.J."/>
            <person name="Osoegawa K."/>
            <person name="Zhu B."/>
            <person name="Marra M."/>
            <person name="Schein J."/>
            <person name="Bosdet I."/>
            <person name="Fjell C."/>
            <person name="Jones S."/>
            <person name="Krzywinski M."/>
            <person name="Mathewson C."/>
            <person name="Siddiqui A."/>
            <person name="Wye N."/>
            <person name="McPherson J."/>
            <person name="Zhao S."/>
            <person name="Fraser C.M."/>
            <person name="Shetty J."/>
            <person name="Shatsman S."/>
            <person name="Geer K."/>
            <person name="Chen Y."/>
            <person name="Abramzon S."/>
            <person name="Nierman W.C."/>
            <person name="Havlak P.H."/>
            <person name="Chen R."/>
            <person name="Durbin K.J."/>
            <person name="Egan A."/>
            <person name="Ren Y."/>
            <person name="Song X.-Z."/>
            <person name="Li B."/>
            <person name="Liu Y."/>
            <person name="Qin X."/>
            <person name="Cawley S."/>
            <person name="Cooney A.J."/>
            <person name="D'Souza L.M."/>
            <person name="Martin K."/>
            <person name="Wu J.Q."/>
            <person name="Gonzalez-Garay M.L."/>
            <person name="Jackson A.R."/>
            <person name="Kalafus K.J."/>
            <person name="McLeod M.P."/>
            <person name="Milosavljevic A."/>
            <person name="Virk D."/>
            <person name="Volkov A."/>
            <person name="Wheeler D.A."/>
            <person name="Zhang Z."/>
            <person name="Bailey J.A."/>
            <person name="Eichler E.E."/>
            <person name="Tuzun E."/>
            <person name="Birney E."/>
            <person name="Mongin E."/>
            <person name="Ureta-Vidal A."/>
            <person name="Woodwark C."/>
            <person name="Zdobnov E."/>
            <person name="Bork P."/>
            <person name="Suyama M."/>
            <person name="Torrents D."/>
            <person name="Alexandersson M."/>
            <person name="Trask B.J."/>
            <person name="Young J.M."/>
            <person name="Huang H."/>
            <person name="Wang H."/>
            <person name="Xing H."/>
            <person name="Daniels S."/>
            <person name="Gietzen D."/>
            <person name="Schmidt J."/>
            <person name="Stevens K."/>
            <person name="Vitt U."/>
            <person name="Wingrove J."/>
            <person name="Camara F."/>
            <person name="Mar Alba M."/>
            <person name="Abril J.F."/>
            <person name="Guigo R."/>
            <person name="Smit A."/>
            <person name="Dubchak I."/>
            <person name="Rubin E.M."/>
            <person name="Couronne O."/>
            <person name="Poliakov A."/>
            <person name="Huebner N."/>
            <person name="Ganten D."/>
            <person name="Goesele C."/>
            <person name="Hummel O."/>
            <person name="Kreitler T."/>
            <person name="Lee Y.-A."/>
            <person name="Monti J."/>
            <person name="Schulz H."/>
            <person name="Zimdahl H."/>
            <person name="Himmelbauer H."/>
            <person name="Lehrach H."/>
            <person name="Jacob H.J."/>
            <person name="Bromberg S."/>
            <person name="Gullings-Handley J."/>
            <person name="Jensen-Seaman M.I."/>
            <person name="Kwitek A.E."/>
            <person name="Lazar J."/>
            <person name="Pasko D."/>
            <person name="Tonellato P.J."/>
            <person name="Twigger S."/>
            <person name="Ponting C.P."/>
            <person name="Duarte J.M."/>
            <person name="Rice S."/>
            <person name="Goodstadt L."/>
            <person name="Beatson S.A."/>
            <person name="Emes R.D."/>
            <person name="Winter E.E."/>
            <person name="Webber C."/>
            <person name="Brandt P."/>
            <person name="Nyakatura G."/>
            <person name="Adetobi M."/>
            <person name="Chiaromonte F."/>
            <person name="Elnitski L."/>
            <person name="Eswara P."/>
            <person name="Hardison R.C."/>
            <person name="Hou M."/>
            <person name="Kolbe D."/>
            <person name="Makova K."/>
            <person name="Miller W."/>
            <person name="Nekrutenko A."/>
            <person name="Riemer C."/>
            <person name="Schwartz S."/>
            <person name="Taylor J."/>
            <person name="Yang S."/>
            <person name="Zhang Y."/>
            <person name="Lindpaintner K."/>
            <person name="Andrews T.D."/>
            <person name="Caccamo M."/>
            <person name="Clamp M."/>
            <person name="Clarke L."/>
            <person name="Curwen V."/>
            <person name="Durbin R.M."/>
            <person name="Eyras E."/>
            <person name="Searle S.M."/>
            <person name="Cooper G.M."/>
            <person name="Batzoglou S."/>
            <person name="Brudno M."/>
            <person name="Sidow A."/>
            <person name="Stone E.A."/>
            <person name="Payseur B.A."/>
            <person name="Bourque G."/>
            <person name="Lopez-Otin C."/>
            <person name="Puente X.S."/>
            <person name="Chakrabarti K."/>
            <person name="Chatterji S."/>
            <person name="Dewey C."/>
            <person name="Pachter L."/>
            <person name="Bray N."/>
            <person name="Yap V.B."/>
            <person name="Caspi A."/>
            <person name="Tesler G."/>
            <person name="Pevzner P.A."/>
            <person name="Haussler D."/>
            <person name="Roskin K.M."/>
            <person name="Baertsch R."/>
            <person name="Clawson H."/>
            <person name="Furey T.S."/>
            <person name="Hinrichs A.S."/>
            <person name="Karolchik D."/>
            <person name="Kent W.J."/>
            <person name="Rosenbloom K.R."/>
            <person name="Trumbower H."/>
            <person name="Weirauch M."/>
            <person name="Cooper D.N."/>
            <person name="Stenson P.D."/>
            <person name="Ma B."/>
            <person name="Brent M."/>
            <person name="Arumugam M."/>
            <person name="Shteynberg D."/>
            <person name="Copley R.R."/>
            <person name="Taylor M.S."/>
            <person name="Riethman H."/>
            <person name="Mudunuri U."/>
            <person name="Peterson J."/>
            <person name="Guyer M."/>
            <person name="Felsenfeld A."/>
            <person name="Old S."/>
            <person name="Mockrin S."/>
            <person name="Collins F.S."/>
        </authorList>
    </citation>
    <scope>NUCLEOTIDE SEQUENCE [LARGE SCALE GENOMIC DNA]</scope>
    <source>
        <strain>Brown Norway</strain>
    </source>
</reference>
<reference key="2">
    <citation type="journal article" date="2010" name="Biochem. Biophys. Res. Commun.">
        <title>Cloning and characterization of rat transient receptor potential-melastatin 4 (TRPM4).</title>
        <authorList>
            <person name="Yoo J.C."/>
            <person name="Yarishkin O.V."/>
            <person name="Hwang E.M."/>
            <person name="Kim E."/>
            <person name="Kim D.G."/>
            <person name="Park N."/>
            <person name="Hong S.G."/>
            <person name="Park J.Y."/>
        </authorList>
    </citation>
    <scope>NUCLEOTIDE SEQUENCE [MRNA] (ISOFORMS 1 AND 2)</scope>
    <scope>FUNCTION</scope>
    <scope>SUBCELLULAR LOCATION</scope>
    <scope>TISSUE SPECIFICITY</scope>
</reference>
<reference key="3">
    <citation type="submission" date="2000-03" db="EMBL/GenBank/DDBJ databases">
        <title>Cloning of novel Ca-permeable channels.</title>
        <authorList>
            <person name="Ohki G."/>
            <person name="Ishibashi K."/>
            <person name="Suzuki M."/>
        </authorList>
    </citation>
    <scope>NUCLEOTIDE SEQUENCE [MRNA] OF 717-1208</scope>
    <source>
        <tissue>Brain</tissue>
    </source>
</reference>
<reference key="4">
    <citation type="journal article" date="2004" name="J. Cardiovasc. Electrophysiol.">
        <title>Activation of the Ca(2+)-activated nonselective cation channel by diacylglycerol analogues in rat cardiomyocytes.</title>
        <authorList>
            <person name="Guinamard R."/>
            <person name="Chatelier A."/>
            <person name="Lenfant J."/>
            <person name="Bois P."/>
        </authorList>
    </citation>
    <scope>PHOSPHORYLATION</scope>
</reference>
<reference key="5">
    <citation type="journal article" date="2006" name="Hypertension">
        <title>Functional expression of the TRPM4 cationic current in ventricular cardiomyocytes from spontaneously hypertensive rats.</title>
        <authorList>
            <person name="Guinamard R."/>
            <person name="Demion M."/>
            <person name="Magaud C."/>
            <person name="Potreau D."/>
            <person name="Bois P."/>
        </authorList>
    </citation>
    <scope>FUNCTION</scope>
    <scope>TRANSPORTER ACTIVITY</scope>
    <scope>ACTIVITY REGULATION</scope>
</reference>
<reference key="6">
    <citation type="journal article" date="2012" name="Nat. Commun.">
        <title>Quantitative maps of protein phosphorylation sites across 14 different rat organs and tissues.</title>
        <authorList>
            <person name="Lundby A."/>
            <person name="Secher A."/>
            <person name="Lage K."/>
            <person name="Nordsborg N.B."/>
            <person name="Dmytriyev A."/>
            <person name="Lundby C."/>
            <person name="Olsen J.V."/>
        </authorList>
    </citation>
    <scope>PHOSPHORYLATION [LARGE SCALE ANALYSIS] AT SER-527</scope>
    <scope>IDENTIFICATION BY MASS SPECTROMETRY [LARGE SCALE ANALYSIS]</scope>
</reference>
<protein>
    <recommendedName>
        <fullName>Transient receptor potential cation channel subfamily M member 4</fullName>
    </recommendedName>
    <alternativeName>
        <fullName>Calcium-activated non-selective cation channel 1</fullName>
    </alternativeName>
    <alternativeName>
        <fullName>Long transient receptor potential channel 4</fullName>
        <shortName>LTrpC-4</shortName>
        <shortName>LTrpC4</shortName>
    </alternativeName>
    <alternativeName>
        <fullName>MLS2s</fullName>
    </alternativeName>
    <alternativeName>
        <fullName>Melastatin-like 2</fullName>
    </alternativeName>
</protein>
<evidence type="ECO:0000250" key="1"/>
<evidence type="ECO:0000250" key="2">
    <source>
        <dbReference type="UniProtKB" id="Q7TN37"/>
    </source>
</evidence>
<evidence type="ECO:0000250" key="3">
    <source>
        <dbReference type="UniProtKB" id="Q8TD43"/>
    </source>
</evidence>
<evidence type="ECO:0000255" key="4"/>
<evidence type="ECO:0000256" key="5">
    <source>
        <dbReference type="SAM" id="MobiDB-lite"/>
    </source>
</evidence>
<evidence type="ECO:0000269" key="6">
    <source>
    </source>
</evidence>
<evidence type="ECO:0000269" key="7">
    <source>
    </source>
</evidence>
<evidence type="ECO:0000303" key="8">
    <source>
    </source>
</evidence>
<evidence type="ECO:0000305" key="9"/>
<evidence type="ECO:0007744" key="10">
    <source>
    </source>
</evidence>